<evidence type="ECO:0000250" key="1"/>
<evidence type="ECO:0000256" key="2">
    <source>
        <dbReference type="SAM" id="MobiDB-lite"/>
    </source>
</evidence>
<evidence type="ECO:0000269" key="3">
    <source>
    </source>
</evidence>
<evidence type="ECO:0000305" key="4"/>
<proteinExistence type="evidence at transcript level"/>
<keyword id="KW-0963">Cytoplasm</keyword>
<keyword id="KW-0968">Cytoplasmic vesicle</keyword>
<keyword id="KW-0256">Endoplasmic reticulum</keyword>
<keyword id="KW-0931">ER-Golgi transport</keyword>
<keyword id="KW-0333">Golgi apparatus</keyword>
<keyword id="KW-0472">Membrane</keyword>
<keyword id="KW-0479">Metal-binding</keyword>
<keyword id="KW-0653">Protein transport</keyword>
<keyword id="KW-1185">Reference proteome</keyword>
<keyword id="KW-0813">Transport</keyword>
<keyword id="KW-0862">Zinc</keyword>
<comment type="function">
    <text evidence="1">Component of the coat protein complex II (COPII) which promotes the formation of transport vesicles from the endoplasmic reticulum (ER). The coat has two main functions, the physical deformation of the endoplasmic reticulum membrane into vesicles and the selection of cargo molecules (By similarity).</text>
</comment>
<comment type="subunit">
    <text evidence="1">The COPII coat is composed of at least 5 proteins: the SEC23/24 complex, the SEC13/31 complex, and the protein SAR1.</text>
</comment>
<comment type="subcellular location">
    <subcellularLocation>
        <location evidence="3">Cytoplasm</location>
    </subcellularLocation>
    <subcellularLocation>
        <location evidence="1">Cytoplasmic vesicle</location>
        <location evidence="1">COPII-coated vesicle membrane</location>
        <topology evidence="1">Peripheral membrane protein</topology>
        <orientation evidence="1">Cytoplasmic side</orientation>
    </subcellularLocation>
    <subcellularLocation>
        <location evidence="1">Endoplasmic reticulum membrane</location>
        <topology evidence="1">Peripheral membrane protein</topology>
        <orientation evidence="1">Cytoplasmic side</orientation>
    </subcellularLocation>
    <subcellularLocation>
        <location evidence="1">Golgi apparatus membrane</location>
        <topology evidence="1">Peripheral membrane protein</topology>
        <orientation evidence="1">Cytoplasmic side</orientation>
    </subcellularLocation>
</comment>
<comment type="similarity">
    <text evidence="4">Belongs to the SEC23/SEC24 family. SEC24 subfamily.</text>
</comment>
<protein>
    <recommendedName>
        <fullName>Protein transport protein sec24</fullName>
    </recommendedName>
</protein>
<accession>Q9UUI5</accession>
<accession>P78800</accession>
<gene>
    <name type="primary">sec24</name>
    <name type="ORF">SPAC22F8.08</name>
</gene>
<feature type="chain" id="PRO_0000205162" description="Protein transport protein sec24">
    <location>
        <begin position="1"/>
        <end position="926"/>
    </location>
</feature>
<feature type="region of interest" description="Disordered" evidence="2">
    <location>
        <begin position="1"/>
        <end position="21"/>
    </location>
</feature>
<feature type="region of interest" description="Disordered" evidence="2">
    <location>
        <begin position="73"/>
        <end position="93"/>
    </location>
</feature>
<feature type="region of interest" description="Disordered" evidence="2">
    <location>
        <begin position="107"/>
        <end position="134"/>
    </location>
</feature>
<feature type="region of interest" description="Zinc finger-like">
    <location>
        <begin position="255"/>
        <end position="281"/>
    </location>
</feature>
<feature type="compositionally biased region" description="Polar residues" evidence="2">
    <location>
        <begin position="73"/>
        <end position="85"/>
    </location>
</feature>
<feature type="binding site" evidence="1">
    <location>
        <position position="256"/>
    </location>
    <ligand>
        <name>Zn(2+)</name>
        <dbReference type="ChEBI" id="CHEBI:29105"/>
    </ligand>
</feature>
<feature type="binding site" evidence="1">
    <location>
        <position position="259"/>
    </location>
    <ligand>
        <name>Zn(2+)</name>
        <dbReference type="ChEBI" id="CHEBI:29105"/>
    </ligand>
</feature>
<feature type="binding site" evidence="1">
    <location>
        <position position="278"/>
    </location>
    <ligand>
        <name>Zn(2+)</name>
        <dbReference type="ChEBI" id="CHEBI:29105"/>
    </ligand>
</feature>
<feature type="binding site" evidence="1">
    <location>
        <position position="281"/>
    </location>
    <ligand>
        <name>Zn(2+)</name>
        <dbReference type="ChEBI" id="CHEBI:29105"/>
    </ligand>
</feature>
<feature type="sequence conflict" description="In Ref. 2; BAA13811." evidence="4" ref="2">
    <original>G</original>
    <variation>C</variation>
    <location>
        <position position="714"/>
    </location>
</feature>
<sequence length="926" mass="101904">MSQEDAFYGKGSYGASSGNSNIPPQGFQPVYPVAGQLDNTAPYVGAVAEGTAEGIVSNGEYAVGAMGAAPTNIIGSVDQQPPVSHTSHKSRRQYPAEVFELTNTLAASPAPPSLSEPSYVMARTPSSSPYPHDRAEVGTKSLSAQFGGMSLGADGAAAMPTNELVSVDLYNQTPEISDLTSPPPPINLPLSYSATGAATSNCPPKYVRSTINCVPTTNSLLKKSKIPFALVIRPYTSLVEEDDPVPVVTDTIISRCRRCRMYINPFSIFIDNGHRYRCNSCGIVNEVPQSYDWDSFRNVQRDRWQRPELNYAVVDFIAPQEYMVRAPQPLVYVFLIDISFVSISSGMVGTASRAILESLDRIPNKEGRAKVAFIGVDSALHFFSVSPGAEEATQLVVSDLEEPFLPRNQDLLLNLRECRQGIENLLERFQSMFATTRDSSNALGPGLKAAHRLIENIGGKICCLISSLPNVGVGKLELREDPKLLGTNRESSLLHPNDSFYKSFAVECSTSQVSVDMFLFSSQYQDVATLSCLPRYTSGKTQFYHRWNASRSEDALKFASELTNYLSMEIELEAVMRVRGSNGLRMSSFYGNFFNRSSDLCAFPSFPRDQSYVVEVVIEDTITKPFVSFQTAMLHTTCNGERRIRVLTISLPTTNSMTDLYASADQVAIAQYLTVRASEKALSSTLNEARDSIISKLVEILEVYKKNLAGQNTGAAIPLQISTNLRLLPLLCLALTKHTGFRRSSHISSDLRSIALCYLSTLPTPLLMRYIYPTLYSLHDMPIEAGTVTEQGVVLPSALNLTSALLQSFGLYLVDTHIHQFLYIGKDAVPQLLIDAFGVNSLADLKAGRFTMPVIDNPLNVRINAILGKLRSLDKGSTIMPSLYLVRGDGDPQLRSWFFSHFVEDRSENSPSYLQFLQTLKEKVRD</sequence>
<organism>
    <name type="scientific">Schizosaccharomyces pombe (strain 972 / ATCC 24843)</name>
    <name type="common">Fission yeast</name>
    <dbReference type="NCBI Taxonomy" id="284812"/>
    <lineage>
        <taxon>Eukaryota</taxon>
        <taxon>Fungi</taxon>
        <taxon>Dikarya</taxon>
        <taxon>Ascomycota</taxon>
        <taxon>Taphrinomycotina</taxon>
        <taxon>Schizosaccharomycetes</taxon>
        <taxon>Schizosaccharomycetales</taxon>
        <taxon>Schizosaccharomycetaceae</taxon>
        <taxon>Schizosaccharomyces</taxon>
    </lineage>
</organism>
<dbReference type="EMBL" id="CU329670">
    <property type="protein sequence ID" value="CAB52718.1"/>
    <property type="molecule type" value="Genomic_DNA"/>
</dbReference>
<dbReference type="EMBL" id="D89149">
    <property type="protein sequence ID" value="BAA13811.1"/>
    <property type="molecule type" value="mRNA"/>
</dbReference>
<dbReference type="PIR" id="T38198">
    <property type="entry name" value="T38198"/>
</dbReference>
<dbReference type="PIR" id="T42425">
    <property type="entry name" value="T42425"/>
</dbReference>
<dbReference type="RefSeq" id="NP_594731.1">
    <property type="nucleotide sequence ID" value="NM_001020159.2"/>
</dbReference>
<dbReference type="SMR" id="Q9UUI5"/>
<dbReference type="BioGRID" id="278098">
    <property type="interactions" value="5"/>
</dbReference>
<dbReference type="FunCoup" id="Q9UUI5">
    <property type="interactions" value="420"/>
</dbReference>
<dbReference type="IntAct" id="Q9UUI5">
    <property type="interactions" value="1"/>
</dbReference>
<dbReference type="STRING" id="284812.Q9UUI5"/>
<dbReference type="iPTMnet" id="Q9UUI5"/>
<dbReference type="PaxDb" id="4896-SPAC22F8.08.1"/>
<dbReference type="EnsemblFungi" id="SPAC22F8.08.1">
    <property type="protein sequence ID" value="SPAC22F8.08.1:pep"/>
    <property type="gene ID" value="SPAC22F8.08"/>
</dbReference>
<dbReference type="GeneID" id="2541601"/>
<dbReference type="KEGG" id="spo:2541601"/>
<dbReference type="PomBase" id="SPAC22F8.08">
    <property type="gene designation" value="sec24"/>
</dbReference>
<dbReference type="VEuPathDB" id="FungiDB:SPAC22F8.08"/>
<dbReference type="eggNOG" id="KOG1985">
    <property type="taxonomic scope" value="Eukaryota"/>
</dbReference>
<dbReference type="HOGENOM" id="CLU_004589_2_1_1"/>
<dbReference type="InParanoid" id="Q9UUI5"/>
<dbReference type="OMA" id="AVECSKQ"/>
<dbReference type="PhylomeDB" id="Q9UUI5"/>
<dbReference type="Reactome" id="R-SPO-204005">
    <property type="pathway name" value="COPII-mediated vesicle transport"/>
</dbReference>
<dbReference type="Reactome" id="R-SPO-5694530">
    <property type="pathway name" value="Cargo concentration in the ER"/>
</dbReference>
<dbReference type="Reactome" id="R-SPO-983170">
    <property type="pathway name" value="Antigen Presentation: Folding, assembly and peptide loading of class I MHC"/>
</dbReference>
<dbReference type="PRO" id="PR:Q9UUI5"/>
<dbReference type="Proteomes" id="UP000002485">
    <property type="component" value="Chromosome I"/>
</dbReference>
<dbReference type="GO" id="GO:0005801">
    <property type="term" value="C:cis-Golgi network"/>
    <property type="evidence" value="ECO:0000314"/>
    <property type="project" value="PomBase"/>
</dbReference>
<dbReference type="GO" id="GO:0030127">
    <property type="term" value="C:COPII vesicle coat"/>
    <property type="evidence" value="ECO:0000318"/>
    <property type="project" value="GO_Central"/>
</dbReference>
<dbReference type="GO" id="GO:0005829">
    <property type="term" value="C:cytosol"/>
    <property type="evidence" value="ECO:0007005"/>
    <property type="project" value="PomBase"/>
</dbReference>
<dbReference type="GO" id="GO:0070971">
    <property type="term" value="C:endoplasmic reticulum exit site"/>
    <property type="evidence" value="ECO:0000314"/>
    <property type="project" value="PomBase"/>
</dbReference>
<dbReference type="GO" id="GO:0005789">
    <property type="term" value="C:endoplasmic reticulum membrane"/>
    <property type="evidence" value="ECO:0007669"/>
    <property type="project" value="UniProtKB-SubCell"/>
</dbReference>
<dbReference type="GO" id="GO:1990753">
    <property type="term" value="C:equatorial cell cortex"/>
    <property type="evidence" value="ECO:0000314"/>
    <property type="project" value="PomBase"/>
</dbReference>
<dbReference type="GO" id="GO:0000139">
    <property type="term" value="C:Golgi membrane"/>
    <property type="evidence" value="ECO:0007669"/>
    <property type="project" value="UniProtKB-SubCell"/>
</dbReference>
<dbReference type="GO" id="GO:0000149">
    <property type="term" value="F:SNARE binding"/>
    <property type="evidence" value="ECO:0000318"/>
    <property type="project" value="GO_Central"/>
</dbReference>
<dbReference type="GO" id="GO:0008270">
    <property type="term" value="F:zinc ion binding"/>
    <property type="evidence" value="ECO:0000318"/>
    <property type="project" value="GO_Central"/>
</dbReference>
<dbReference type="GO" id="GO:0090110">
    <property type="term" value="P:COPII-coated vesicle cargo loading"/>
    <property type="evidence" value="ECO:0000318"/>
    <property type="project" value="GO_Central"/>
</dbReference>
<dbReference type="GO" id="GO:0006886">
    <property type="term" value="P:intracellular protein transport"/>
    <property type="evidence" value="ECO:0000305"/>
    <property type="project" value="PomBase"/>
</dbReference>
<dbReference type="CDD" id="cd01479">
    <property type="entry name" value="Sec24-like"/>
    <property type="match status" value="1"/>
</dbReference>
<dbReference type="Gene3D" id="2.60.40.1670">
    <property type="entry name" value="beta-sandwich domain of Sec23/24"/>
    <property type="match status" value="1"/>
</dbReference>
<dbReference type="Gene3D" id="1.20.120.730">
    <property type="entry name" value="Sec23/Sec24 helical domain"/>
    <property type="match status" value="1"/>
</dbReference>
<dbReference type="Gene3D" id="3.40.20.10">
    <property type="entry name" value="Severin"/>
    <property type="match status" value="1"/>
</dbReference>
<dbReference type="Gene3D" id="3.40.50.410">
    <property type="entry name" value="von Willebrand factor, type A domain"/>
    <property type="match status" value="1"/>
</dbReference>
<dbReference type="Gene3D" id="2.30.30.380">
    <property type="entry name" value="Zn-finger domain of Sec23/24"/>
    <property type="match status" value="1"/>
</dbReference>
<dbReference type="InterPro" id="IPR029006">
    <property type="entry name" value="ADF-H/Gelsolin-like_dom_sf"/>
</dbReference>
<dbReference type="InterPro" id="IPR007123">
    <property type="entry name" value="Gelsolin-like_dom"/>
</dbReference>
<dbReference type="InterPro" id="IPR036180">
    <property type="entry name" value="Gelsolin-like_dom_sf"/>
</dbReference>
<dbReference type="InterPro" id="IPR006900">
    <property type="entry name" value="Sec23/24_helical_dom"/>
</dbReference>
<dbReference type="InterPro" id="IPR036175">
    <property type="entry name" value="Sec23/24_helical_dom_sf"/>
</dbReference>
<dbReference type="InterPro" id="IPR006896">
    <property type="entry name" value="Sec23/24_trunk_dom"/>
</dbReference>
<dbReference type="InterPro" id="IPR012990">
    <property type="entry name" value="Sec23_24_beta_S"/>
</dbReference>
<dbReference type="InterPro" id="IPR050550">
    <property type="entry name" value="SEC23_SEC24_subfamily"/>
</dbReference>
<dbReference type="InterPro" id="IPR041742">
    <property type="entry name" value="Sec24-like_trunk_dom"/>
</dbReference>
<dbReference type="InterPro" id="IPR036465">
    <property type="entry name" value="vWFA_dom_sf"/>
</dbReference>
<dbReference type="InterPro" id="IPR006895">
    <property type="entry name" value="Znf_Sec23_Sec24"/>
</dbReference>
<dbReference type="InterPro" id="IPR036174">
    <property type="entry name" value="Znf_Sec23_Sec24_sf"/>
</dbReference>
<dbReference type="PANTHER" id="PTHR13803">
    <property type="entry name" value="SEC24-RELATED PROTEIN"/>
    <property type="match status" value="1"/>
</dbReference>
<dbReference type="PANTHER" id="PTHR13803:SF39">
    <property type="entry name" value="SECRETORY 24AB, ISOFORM A"/>
    <property type="match status" value="1"/>
</dbReference>
<dbReference type="Pfam" id="PF00626">
    <property type="entry name" value="Gelsolin"/>
    <property type="match status" value="1"/>
</dbReference>
<dbReference type="Pfam" id="PF08033">
    <property type="entry name" value="Sec23_BS"/>
    <property type="match status" value="1"/>
</dbReference>
<dbReference type="Pfam" id="PF04815">
    <property type="entry name" value="Sec23_helical"/>
    <property type="match status" value="1"/>
</dbReference>
<dbReference type="Pfam" id="PF04811">
    <property type="entry name" value="Sec23_trunk"/>
    <property type="match status" value="1"/>
</dbReference>
<dbReference type="Pfam" id="PF04810">
    <property type="entry name" value="zf-Sec23_Sec24"/>
    <property type="match status" value="1"/>
</dbReference>
<dbReference type="SUPFAM" id="SSF81995">
    <property type="entry name" value="beta-sandwich domain of Sec23/24"/>
    <property type="match status" value="1"/>
</dbReference>
<dbReference type="SUPFAM" id="SSF82754">
    <property type="entry name" value="C-terminal, gelsolin-like domain of Sec23/24"/>
    <property type="match status" value="1"/>
</dbReference>
<dbReference type="SUPFAM" id="SSF81811">
    <property type="entry name" value="Helical domain of Sec23/24"/>
    <property type="match status" value="1"/>
</dbReference>
<dbReference type="SUPFAM" id="SSF53300">
    <property type="entry name" value="vWA-like"/>
    <property type="match status" value="1"/>
</dbReference>
<dbReference type="SUPFAM" id="SSF82919">
    <property type="entry name" value="Zn-finger domain of Sec23/24"/>
    <property type="match status" value="1"/>
</dbReference>
<reference key="1">
    <citation type="journal article" date="2002" name="Nature">
        <title>The genome sequence of Schizosaccharomyces pombe.</title>
        <authorList>
            <person name="Wood V."/>
            <person name="Gwilliam R."/>
            <person name="Rajandream M.A."/>
            <person name="Lyne M.H."/>
            <person name="Lyne R."/>
            <person name="Stewart A."/>
            <person name="Sgouros J.G."/>
            <person name="Peat N."/>
            <person name="Hayles J."/>
            <person name="Baker S.G."/>
            <person name="Basham D."/>
            <person name="Bowman S."/>
            <person name="Brooks K."/>
            <person name="Brown D."/>
            <person name="Brown S."/>
            <person name="Chillingworth T."/>
            <person name="Churcher C.M."/>
            <person name="Collins M."/>
            <person name="Connor R."/>
            <person name="Cronin A."/>
            <person name="Davis P."/>
            <person name="Feltwell T."/>
            <person name="Fraser A."/>
            <person name="Gentles S."/>
            <person name="Goble A."/>
            <person name="Hamlin N."/>
            <person name="Harris D.E."/>
            <person name="Hidalgo J."/>
            <person name="Hodgson G."/>
            <person name="Holroyd S."/>
            <person name="Hornsby T."/>
            <person name="Howarth S."/>
            <person name="Huckle E.J."/>
            <person name="Hunt S."/>
            <person name="Jagels K."/>
            <person name="James K.D."/>
            <person name="Jones L."/>
            <person name="Jones M."/>
            <person name="Leather S."/>
            <person name="McDonald S."/>
            <person name="McLean J."/>
            <person name="Mooney P."/>
            <person name="Moule S."/>
            <person name="Mungall K.L."/>
            <person name="Murphy L.D."/>
            <person name="Niblett D."/>
            <person name="Odell C."/>
            <person name="Oliver K."/>
            <person name="O'Neil S."/>
            <person name="Pearson D."/>
            <person name="Quail M.A."/>
            <person name="Rabbinowitsch E."/>
            <person name="Rutherford K.M."/>
            <person name="Rutter S."/>
            <person name="Saunders D."/>
            <person name="Seeger K."/>
            <person name="Sharp S."/>
            <person name="Skelton J."/>
            <person name="Simmonds M.N."/>
            <person name="Squares R."/>
            <person name="Squares S."/>
            <person name="Stevens K."/>
            <person name="Taylor K."/>
            <person name="Taylor R.G."/>
            <person name="Tivey A."/>
            <person name="Walsh S.V."/>
            <person name="Warren T."/>
            <person name="Whitehead S."/>
            <person name="Woodward J.R."/>
            <person name="Volckaert G."/>
            <person name="Aert R."/>
            <person name="Robben J."/>
            <person name="Grymonprez B."/>
            <person name="Weltjens I."/>
            <person name="Vanstreels E."/>
            <person name="Rieger M."/>
            <person name="Schaefer M."/>
            <person name="Mueller-Auer S."/>
            <person name="Gabel C."/>
            <person name="Fuchs M."/>
            <person name="Duesterhoeft A."/>
            <person name="Fritzc C."/>
            <person name="Holzer E."/>
            <person name="Moestl D."/>
            <person name="Hilbert H."/>
            <person name="Borzym K."/>
            <person name="Langer I."/>
            <person name="Beck A."/>
            <person name="Lehrach H."/>
            <person name="Reinhardt R."/>
            <person name="Pohl T.M."/>
            <person name="Eger P."/>
            <person name="Zimmermann W."/>
            <person name="Wedler H."/>
            <person name="Wambutt R."/>
            <person name="Purnelle B."/>
            <person name="Goffeau A."/>
            <person name="Cadieu E."/>
            <person name="Dreano S."/>
            <person name="Gloux S."/>
            <person name="Lelaure V."/>
            <person name="Mottier S."/>
            <person name="Galibert F."/>
            <person name="Aves S.J."/>
            <person name="Xiang Z."/>
            <person name="Hunt C."/>
            <person name="Moore K."/>
            <person name="Hurst S.M."/>
            <person name="Lucas M."/>
            <person name="Rochet M."/>
            <person name="Gaillardin C."/>
            <person name="Tallada V.A."/>
            <person name="Garzon A."/>
            <person name="Thode G."/>
            <person name="Daga R.R."/>
            <person name="Cruzado L."/>
            <person name="Jimenez J."/>
            <person name="Sanchez M."/>
            <person name="del Rey F."/>
            <person name="Benito J."/>
            <person name="Dominguez A."/>
            <person name="Revuelta J.L."/>
            <person name="Moreno S."/>
            <person name="Armstrong J."/>
            <person name="Forsburg S.L."/>
            <person name="Cerutti L."/>
            <person name="Lowe T."/>
            <person name="McCombie W.R."/>
            <person name="Paulsen I."/>
            <person name="Potashkin J."/>
            <person name="Shpakovski G.V."/>
            <person name="Ussery D."/>
            <person name="Barrell B.G."/>
            <person name="Nurse P."/>
        </authorList>
    </citation>
    <scope>NUCLEOTIDE SEQUENCE [LARGE SCALE GENOMIC DNA]</scope>
    <source>
        <strain>972 / ATCC 24843</strain>
    </source>
</reference>
<reference key="2">
    <citation type="journal article" date="1997" name="DNA Res.">
        <title>Identification of open reading frames in Schizosaccharomyces pombe cDNAs.</title>
        <authorList>
            <person name="Yoshioka S."/>
            <person name="Kato K."/>
            <person name="Nakai K."/>
            <person name="Okayama H."/>
            <person name="Nojima H."/>
        </authorList>
    </citation>
    <scope>NUCLEOTIDE SEQUENCE [LARGE SCALE MRNA] OF 586-926</scope>
    <source>
        <strain>PR745</strain>
    </source>
</reference>
<reference key="3">
    <citation type="journal article" date="2006" name="Nat. Biotechnol.">
        <title>ORFeome cloning and global analysis of protein localization in the fission yeast Schizosaccharomyces pombe.</title>
        <authorList>
            <person name="Matsuyama A."/>
            <person name="Arai R."/>
            <person name="Yashiroda Y."/>
            <person name="Shirai A."/>
            <person name="Kamata A."/>
            <person name="Sekido S."/>
            <person name="Kobayashi Y."/>
            <person name="Hashimoto A."/>
            <person name="Hamamoto M."/>
            <person name="Hiraoka Y."/>
            <person name="Horinouchi S."/>
            <person name="Yoshida M."/>
        </authorList>
    </citation>
    <scope>SUBCELLULAR LOCATION [LARGE SCALE ANALYSIS]</scope>
</reference>
<name>SEC24_SCHPO</name>